<accession>B2S663</accession>
<reference key="1">
    <citation type="journal article" date="2008" name="PLoS ONE">
        <title>Genome sequence of Brucella abortus vaccine strain S19 compared to virulent strains yields candidate virulence genes.</title>
        <authorList>
            <person name="Crasta O.R."/>
            <person name="Folkerts O."/>
            <person name="Fei Z."/>
            <person name="Mane S.P."/>
            <person name="Evans C."/>
            <person name="Martino-Catt S."/>
            <person name="Bricker B."/>
            <person name="Yu G."/>
            <person name="Du L."/>
            <person name="Sobral B.W."/>
        </authorList>
    </citation>
    <scope>NUCLEOTIDE SEQUENCE [LARGE SCALE GENOMIC DNA]</scope>
    <source>
        <strain>S19</strain>
    </source>
</reference>
<feature type="chain" id="PRO_1000142628" description="Large ribosomal subunit protein uL18">
    <location>
        <begin position="1"/>
        <end position="120"/>
    </location>
</feature>
<dbReference type="EMBL" id="CP000887">
    <property type="protein sequence ID" value="ACD72660.1"/>
    <property type="molecule type" value="Genomic_DNA"/>
</dbReference>
<dbReference type="RefSeq" id="WP_002964346.1">
    <property type="nucleotide sequence ID" value="NC_010742.1"/>
</dbReference>
<dbReference type="SMR" id="B2S663"/>
<dbReference type="GeneID" id="97533540"/>
<dbReference type="KEGG" id="bmc:BAbS19_I11550"/>
<dbReference type="HOGENOM" id="CLU_098841_0_1_5"/>
<dbReference type="Proteomes" id="UP000002565">
    <property type="component" value="Chromosome 1"/>
</dbReference>
<dbReference type="GO" id="GO:0022625">
    <property type="term" value="C:cytosolic large ribosomal subunit"/>
    <property type="evidence" value="ECO:0007669"/>
    <property type="project" value="TreeGrafter"/>
</dbReference>
<dbReference type="GO" id="GO:0008097">
    <property type="term" value="F:5S rRNA binding"/>
    <property type="evidence" value="ECO:0007669"/>
    <property type="project" value="TreeGrafter"/>
</dbReference>
<dbReference type="GO" id="GO:0003735">
    <property type="term" value="F:structural constituent of ribosome"/>
    <property type="evidence" value="ECO:0007669"/>
    <property type="project" value="InterPro"/>
</dbReference>
<dbReference type="GO" id="GO:0006412">
    <property type="term" value="P:translation"/>
    <property type="evidence" value="ECO:0007669"/>
    <property type="project" value="UniProtKB-UniRule"/>
</dbReference>
<dbReference type="CDD" id="cd00432">
    <property type="entry name" value="Ribosomal_L18_L5e"/>
    <property type="match status" value="1"/>
</dbReference>
<dbReference type="FunFam" id="3.30.420.100:FF:000001">
    <property type="entry name" value="50S ribosomal protein L18"/>
    <property type="match status" value="1"/>
</dbReference>
<dbReference type="Gene3D" id="3.30.420.100">
    <property type="match status" value="1"/>
</dbReference>
<dbReference type="HAMAP" id="MF_01337_B">
    <property type="entry name" value="Ribosomal_uL18_B"/>
    <property type="match status" value="1"/>
</dbReference>
<dbReference type="InterPro" id="IPR004389">
    <property type="entry name" value="Ribosomal_uL18_bac-type"/>
</dbReference>
<dbReference type="InterPro" id="IPR005484">
    <property type="entry name" value="Ribosomal_uL18_bac/euk"/>
</dbReference>
<dbReference type="NCBIfam" id="TIGR00060">
    <property type="entry name" value="L18_bact"/>
    <property type="match status" value="1"/>
</dbReference>
<dbReference type="PANTHER" id="PTHR12899">
    <property type="entry name" value="39S RIBOSOMAL PROTEIN L18, MITOCHONDRIAL"/>
    <property type="match status" value="1"/>
</dbReference>
<dbReference type="PANTHER" id="PTHR12899:SF3">
    <property type="entry name" value="LARGE RIBOSOMAL SUBUNIT PROTEIN UL18M"/>
    <property type="match status" value="1"/>
</dbReference>
<dbReference type="Pfam" id="PF00861">
    <property type="entry name" value="Ribosomal_L18p"/>
    <property type="match status" value="1"/>
</dbReference>
<dbReference type="SUPFAM" id="SSF53137">
    <property type="entry name" value="Translational machinery components"/>
    <property type="match status" value="1"/>
</dbReference>
<name>RL18_BRUA1</name>
<gene>
    <name evidence="1" type="primary">rplR</name>
    <name type="ordered locus">BAbS19_I11550</name>
</gene>
<protein>
    <recommendedName>
        <fullName evidence="1">Large ribosomal subunit protein uL18</fullName>
    </recommendedName>
    <alternativeName>
        <fullName evidence="2">50S ribosomal protein L18</fullName>
    </alternativeName>
</protein>
<organism>
    <name type="scientific">Brucella abortus (strain S19)</name>
    <dbReference type="NCBI Taxonomy" id="430066"/>
    <lineage>
        <taxon>Bacteria</taxon>
        <taxon>Pseudomonadati</taxon>
        <taxon>Pseudomonadota</taxon>
        <taxon>Alphaproteobacteria</taxon>
        <taxon>Hyphomicrobiales</taxon>
        <taxon>Brucellaceae</taxon>
        <taxon>Brucella/Ochrobactrum group</taxon>
        <taxon>Brucella</taxon>
    </lineage>
</organism>
<proteinExistence type="inferred from homology"/>
<keyword id="KW-0687">Ribonucleoprotein</keyword>
<keyword id="KW-0689">Ribosomal protein</keyword>
<keyword id="KW-0694">RNA-binding</keyword>
<keyword id="KW-0699">rRNA-binding</keyword>
<sequence>MASPKETLQRRAARVRRQVKAVANGRPRLSVHRSSKNIYAQIIDDVRGVTLAAASTLDGDLKGKLKTGADSAAAAAVGKLVAERAVKAGVKDVVFDRGAFIYHGRVKALAEAAREGGLSF</sequence>
<comment type="function">
    <text evidence="1">This is one of the proteins that bind and probably mediate the attachment of the 5S RNA into the large ribosomal subunit, where it forms part of the central protuberance.</text>
</comment>
<comment type="subunit">
    <text evidence="1">Part of the 50S ribosomal subunit; part of the 5S rRNA/L5/L18/L25 subcomplex. Contacts the 5S and 23S rRNAs.</text>
</comment>
<comment type="similarity">
    <text evidence="1">Belongs to the universal ribosomal protein uL18 family.</text>
</comment>
<evidence type="ECO:0000255" key="1">
    <source>
        <dbReference type="HAMAP-Rule" id="MF_01337"/>
    </source>
</evidence>
<evidence type="ECO:0000305" key="2"/>